<feature type="chain" id="PRO_1000135702" description="3-isopropylmalate dehydratase large subunit">
    <location>
        <begin position="1"/>
        <end position="469"/>
    </location>
</feature>
<feature type="binding site" evidence="1">
    <location>
        <position position="347"/>
    </location>
    <ligand>
        <name>[4Fe-4S] cluster</name>
        <dbReference type="ChEBI" id="CHEBI:49883"/>
    </ligand>
</feature>
<feature type="binding site" evidence="1">
    <location>
        <position position="410"/>
    </location>
    <ligand>
        <name>[4Fe-4S] cluster</name>
        <dbReference type="ChEBI" id="CHEBI:49883"/>
    </ligand>
</feature>
<feature type="binding site" evidence="1">
    <location>
        <position position="413"/>
    </location>
    <ligand>
        <name>[4Fe-4S] cluster</name>
        <dbReference type="ChEBI" id="CHEBI:49883"/>
    </ligand>
</feature>
<proteinExistence type="inferred from homology"/>
<evidence type="ECO:0000255" key="1">
    <source>
        <dbReference type="HAMAP-Rule" id="MF_01026"/>
    </source>
</evidence>
<protein>
    <recommendedName>
        <fullName evidence="1">3-isopropylmalate dehydratase large subunit</fullName>
        <ecNumber evidence="1">4.2.1.33</ecNumber>
    </recommendedName>
    <alternativeName>
        <fullName evidence="1">Alpha-IPM isomerase</fullName>
        <shortName evidence="1">IPMI</shortName>
    </alternativeName>
    <alternativeName>
        <fullName evidence="1">Isopropylmalate isomerase</fullName>
    </alternativeName>
</protein>
<sequence>MSRTFYDKLWDDHVIYSEEDGTATIYIDRQLLHEVTSPQAFEGLNLAGRPVWRISANLAVSDHNVPTTDRSEGITDPISKLQVDTLDQNCDAFGITQYKMNDTRQGIVHVIGPEQGATLPGMTVVCGDSHTSTHGAFGALAFGIGTSEVEHVLATQTLLMKKSKNMLVKVDGRLQPGSTAKDIVLAVIGKIGTAGGTGYTIEFAGEAIRNLSMEGRMTLCNMAIEAGARASLVAVDETTIEYIQGRPYAPKGAAMLQALQYWRTLHSDPDAKFDAVVELRAEEIAPQVTWGTSPEMVLAISDRVPDPEKERDSNKRSAMERALQYMNLNPNTPISSIAVDKVFIGSCTNSRIEDIRAAAKVIDRLGKKVAANVKLALVVPGSGLVKAQAEREGLDRIFKAAGFEWREPGCSMCLAMNADRLEPGERCASTSNRNFEGRQGNGGRTHLVSPAMAAAAAIEGHFVDVRKIS</sequence>
<organism>
    <name type="scientific">Polynucleobacter necessarius subsp. necessarius (strain STIR1)</name>
    <dbReference type="NCBI Taxonomy" id="452638"/>
    <lineage>
        <taxon>Bacteria</taxon>
        <taxon>Pseudomonadati</taxon>
        <taxon>Pseudomonadota</taxon>
        <taxon>Betaproteobacteria</taxon>
        <taxon>Burkholderiales</taxon>
        <taxon>Burkholderiaceae</taxon>
        <taxon>Polynucleobacter</taxon>
    </lineage>
</organism>
<accession>B1XV55</accession>
<dbReference type="EC" id="4.2.1.33" evidence="1"/>
<dbReference type="EMBL" id="CP001010">
    <property type="protein sequence ID" value="ACB44232.1"/>
    <property type="molecule type" value="Genomic_DNA"/>
</dbReference>
<dbReference type="SMR" id="B1XV55"/>
<dbReference type="STRING" id="452638.Pnec_1057"/>
<dbReference type="KEGG" id="pne:Pnec_1057"/>
<dbReference type="eggNOG" id="COG0065">
    <property type="taxonomic scope" value="Bacteria"/>
</dbReference>
<dbReference type="HOGENOM" id="CLU_006714_3_4_4"/>
<dbReference type="OrthoDB" id="9802769at2"/>
<dbReference type="UniPathway" id="UPA00048">
    <property type="reaction ID" value="UER00071"/>
</dbReference>
<dbReference type="GO" id="GO:0003861">
    <property type="term" value="F:3-isopropylmalate dehydratase activity"/>
    <property type="evidence" value="ECO:0007669"/>
    <property type="project" value="UniProtKB-UniRule"/>
</dbReference>
<dbReference type="GO" id="GO:0051539">
    <property type="term" value="F:4 iron, 4 sulfur cluster binding"/>
    <property type="evidence" value="ECO:0007669"/>
    <property type="project" value="UniProtKB-KW"/>
</dbReference>
<dbReference type="GO" id="GO:0046872">
    <property type="term" value="F:metal ion binding"/>
    <property type="evidence" value="ECO:0007669"/>
    <property type="project" value="UniProtKB-KW"/>
</dbReference>
<dbReference type="GO" id="GO:0009098">
    <property type="term" value="P:L-leucine biosynthetic process"/>
    <property type="evidence" value="ECO:0007669"/>
    <property type="project" value="UniProtKB-UniRule"/>
</dbReference>
<dbReference type="CDD" id="cd01583">
    <property type="entry name" value="IPMI"/>
    <property type="match status" value="1"/>
</dbReference>
<dbReference type="FunFam" id="3.30.499.10:FF:000007">
    <property type="entry name" value="3-isopropylmalate dehydratase large subunit"/>
    <property type="match status" value="1"/>
</dbReference>
<dbReference type="Gene3D" id="3.30.499.10">
    <property type="entry name" value="Aconitase, domain 3"/>
    <property type="match status" value="2"/>
</dbReference>
<dbReference type="HAMAP" id="MF_01026">
    <property type="entry name" value="LeuC_type1"/>
    <property type="match status" value="1"/>
</dbReference>
<dbReference type="InterPro" id="IPR004430">
    <property type="entry name" value="3-IsopropMal_deHydase_lsu"/>
</dbReference>
<dbReference type="InterPro" id="IPR015931">
    <property type="entry name" value="Acnase/IPM_dHydase_lsu_aba_1/3"/>
</dbReference>
<dbReference type="InterPro" id="IPR001030">
    <property type="entry name" value="Acoase/IPM_deHydtase_lsu_aba"/>
</dbReference>
<dbReference type="InterPro" id="IPR018136">
    <property type="entry name" value="Aconitase_4Fe-4S_BS"/>
</dbReference>
<dbReference type="InterPro" id="IPR036008">
    <property type="entry name" value="Aconitase_4Fe-4S_dom"/>
</dbReference>
<dbReference type="InterPro" id="IPR050067">
    <property type="entry name" value="IPM_dehydratase_rel_enz"/>
</dbReference>
<dbReference type="InterPro" id="IPR033941">
    <property type="entry name" value="IPMI_cat"/>
</dbReference>
<dbReference type="NCBIfam" id="TIGR00170">
    <property type="entry name" value="leuC"/>
    <property type="match status" value="1"/>
</dbReference>
<dbReference type="NCBIfam" id="NF004016">
    <property type="entry name" value="PRK05478.1"/>
    <property type="match status" value="1"/>
</dbReference>
<dbReference type="NCBIfam" id="NF009116">
    <property type="entry name" value="PRK12466.1"/>
    <property type="match status" value="1"/>
</dbReference>
<dbReference type="PANTHER" id="PTHR43822:SF9">
    <property type="entry name" value="3-ISOPROPYLMALATE DEHYDRATASE"/>
    <property type="match status" value="1"/>
</dbReference>
<dbReference type="PANTHER" id="PTHR43822">
    <property type="entry name" value="HOMOACONITASE, MITOCHONDRIAL-RELATED"/>
    <property type="match status" value="1"/>
</dbReference>
<dbReference type="Pfam" id="PF00330">
    <property type="entry name" value="Aconitase"/>
    <property type="match status" value="1"/>
</dbReference>
<dbReference type="PRINTS" id="PR00415">
    <property type="entry name" value="ACONITASE"/>
</dbReference>
<dbReference type="SUPFAM" id="SSF53732">
    <property type="entry name" value="Aconitase iron-sulfur domain"/>
    <property type="match status" value="1"/>
</dbReference>
<dbReference type="PROSITE" id="PS00450">
    <property type="entry name" value="ACONITASE_1"/>
    <property type="match status" value="1"/>
</dbReference>
<dbReference type="PROSITE" id="PS01244">
    <property type="entry name" value="ACONITASE_2"/>
    <property type="match status" value="1"/>
</dbReference>
<keyword id="KW-0004">4Fe-4S</keyword>
<keyword id="KW-0028">Amino-acid biosynthesis</keyword>
<keyword id="KW-0100">Branched-chain amino acid biosynthesis</keyword>
<keyword id="KW-0408">Iron</keyword>
<keyword id="KW-0411">Iron-sulfur</keyword>
<keyword id="KW-0432">Leucine biosynthesis</keyword>
<keyword id="KW-0456">Lyase</keyword>
<keyword id="KW-0479">Metal-binding</keyword>
<comment type="function">
    <text evidence="1">Catalyzes the isomerization between 2-isopropylmalate and 3-isopropylmalate, via the formation of 2-isopropylmaleate.</text>
</comment>
<comment type="catalytic activity">
    <reaction evidence="1">
        <text>(2R,3S)-3-isopropylmalate = (2S)-2-isopropylmalate</text>
        <dbReference type="Rhea" id="RHEA:32287"/>
        <dbReference type="ChEBI" id="CHEBI:1178"/>
        <dbReference type="ChEBI" id="CHEBI:35121"/>
        <dbReference type="EC" id="4.2.1.33"/>
    </reaction>
</comment>
<comment type="cofactor">
    <cofactor evidence="1">
        <name>[4Fe-4S] cluster</name>
        <dbReference type="ChEBI" id="CHEBI:49883"/>
    </cofactor>
    <text evidence="1">Binds 1 [4Fe-4S] cluster per subunit.</text>
</comment>
<comment type="pathway">
    <text evidence="1">Amino-acid biosynthesis; L-leucine biosynthesis; L-leucine from 3-methyl-2-oxobutanoate: step 2/4.</text>
</comment>
<comment type="subunit">
    <text evidence="1">Heterodimer of LeuC and LeuD.</text>
</comment>
<comment type="similarity">
    <text evidence="1">Belongs to the aconitase/IPM isomerase family. LeuC type 1 subfamily.</text>
</comment>
<reference key="1">
    <citation type="journal article" date="2013" name="Proc. Natl. Acad. Sci. U.S.A.">
        <title>Polynucleobacter necessarius, a model for genome reduction in both free-living and symbiotic bacteria.</title>
        <authorList>
            <person name="Boscaro V."/>
            <person name="Felletti M."/>
            <person name="Vannini C."/>
            <person name="Ackerman M.S."/>
            <person name="Chain P.S."/>
            <person name="Malfatti S."/>
            <person name="Vergez L.M."/>
            <person name="Shin M."/>
            <person name="Doak T.G."/>
            <person name="Lynch M."/>
            <person name="Petroni G."/>
        </authorList>
    </citation>
    <scope>NUCLEOTIDE SEQUENCE [LARGE SCALE GENOMIC DNA]</scope>
    <source>
        <strain>STIR1</strain>
    </source>
</reference>
<gene>
    <name evidence="1" type="primary">leuC</name>
    <name type="ordered locus">Pnec_1057</name>
</gene>
<name>LEUC_POLNS</name>